<gene>
    <name type="primary">AGL90</name>
    <name type="ordered locus">At5g27960</name>
    <name type="ORF">F15F15.30</name>
</gene>
<name>AGL90_ARATH</name>
<comment type="function">
    <text>Probable transcription factor.</text>
</comment>
<comment type="subunit">
    <text evidence="3">Interacts with AGL62.</text>
</comment>
<comment type="subcellular location">
    <subcellularLocation>
        <location evidence="2">Nucleus</location>
    </subcellularLocation>
</comment>
<accession>Q7XJK5</accession>
<organism>
    <name type="scientific">Arabidopsis thaliana</name>
    <name type="common">Mouse-ear cress</name>
    <dbReference type="NCBI Taxonomy" id="3702"/>
    <lineage>
        <taxon>Eukaryota</taxon>
        <taxon>Viridiplantae</taxon>
        <taxon>Streptophyta</taxon>
        <taxon>Embryophyta</taxon>
        <taxon>Tracheophyta</taxon>
        <taxon>Spermatophyta</taxon>
        <taxon>Magnoliopsida</taxon>
        <taxon>eudicotyledons</taxon>
        <taxon>Gunneridae</taxon>
        <taxon>Pentapetalae</taxon>
        <taxon>rosids</taxon>
        <taxon>malvids</taxon>
        <taxon>Brassicales</taxon>
        <taxon>Brassicaceae</taxon>
        <taxon>Camelineae</taxon>
        <taxon>Arabidopsis</taxon>
    </lineage>
</organism>
<reference key="1">
    <citation type="journal article" date="2003" name="Plant Cell">
        <title>Molecular and phylogenetic analyses of the complete MADS-box transcription factor family in Arabidopsis: new openings to the MADS world.</title>
        <authorList>
            <person name="Parenicova L."/>
            <person name="de Folter S."/>
            <person name="Kieffer M."/>
            <person name="Horner D.S."/>
            <person name="Favalli C."/>
            <person name="Busscher J."/>
            <person name="Cook H.E."/>
            <person name="Ingram R.M."/>
            <person name="Kater M.M."/>
            <person name="Davies B."/>
            <person name="Angenent G.C."/>
            <person name="Colombo L."/>
        </authorList>
    </citation>
    <scope>NUCLEOTIDE SEQUENCE [MRNA]</scope>
    <source>
        <strain>cv. Columbia</strain>
    </source>
</reference>
<reference key="2">
    <citation type="journal article" date="2000" name="Nature">
        <title>Sequence and analysis of chromosome 5 of the plant Arabidopsis thaliana.</title>
        <authorList>
            <person name="Tabata S."/>
            <person name="Kaneko T."/>
            <person name="Nakamura Y."/>
            <person name="Kotani H."/>
            <person name="Kato T."/>
            <person name="Asamizu E."/>
            <person name="Miyajima N."/>
            <person name="Sasamoto S."/>
            <person name="Kimura T."/>
            <person name="Hosouchi T."/>
            <person name="Kawashima K."/>
            <person name="Kohara M."/>
            <person name="Matsumoto M."/>
            <person name="Matsuno A."/>
            <person name="Muraki A."/>
            <person name="Nakayama S."/>
            <person name="Nakazaki N."/>
            <person name="Naruo K."/>
            <person name="Okumura S."/>
            <person name="Shinpo S."/>
            <person name="Takeuchi C."/>
            <person name="Wada T."/>
            <person name="Watanabe A."/>
            <person name="Yamada M."/>
            <person name="Yasuda M."/>
            <person name="Sato S."/>
            <person name="de la Bastide M."/>
            <person name="Huang E."/>
            <person name="Spiegel L."/>
            <person name="Gnoj L."/>
            <person name="O'Shaughnessy A."/>
            <person name="Preston R."/>
            <person name="Habermann K."/>
            <person name="Murray J."/>
            <person name="Johnson D."/>
            <person name="Rohlfing T."/>
            <person name="Nelson J."/>
            <person name="Stoneking T."/>
            <person name="Pepin K."/>
            <person name="Spieth J."/>
            <person name="Sekhon M."/>
            <person name="Armstrong J."/>
            <person name="Becker M."/>
            <person name="Belter E."/>
            <person name="Cordum H."/>
            <person name="Cordes M."/>
            <person name="Courtney L."/>
            <person name="Courtney W."/>
            <person name="Dante M."/>
            <person name="Du H."/>
            <person name="Edwards J."/>
            <person name="Fryman J."/>
            <person name="Haakensen B."/>
            <person name="Lamar E."/>
            <person name="Latreille P."/>
            <person name="Leonard S."/>
            <person name="Meyer R."/>
            <person name="Mulvaney E."/>
            <person name="Ozersky P."/>
            <person name="Riley A."/>
            <person name="Strowmatt C."/>
            <person name="Wagner-McPherson C."/>
            <person name="Wollam A."/>
            <person name="Yoakum M."/>
            <person name="Bell M."/>
            <person name="Dedhia N."/>
            <person name="Parnell L."/>
            <person name="Shah R."/>
            <person name="Rodriguez M."/>
            <person name="Hoon See L."/>
            <person name="Vil D."/>
            <person name="Baker J."/>
            <person name="Kirchoff K."/>
            <person name="Toth K."/>
            <person name="King L."/>
            <person name="Bahret A."/>
            <person name="Miller B."/>
            <person name="Marra M.A."/>
            <person name="Martienssen R."/>
            <person name="McCombie W.R."/>
            <person name="Wilson R.K."/>
            <person name="Murphy G."/>
            <person name="Bancroft I."/>
            <person name="Volckaert G."/>
            <person name="Wambutt R."/>
            <person name="Duesterhoeft A."/>
            <person name="Stiekema W."/>
            <person name="Pohl T."/>
            <person name="Entian K.-D."/>
            <person name="Terryn N."/>
            <person name="Hartley N."/>
            <person name="Bent E."/>
            <person name="Johnson S."/>
            <person name="Langham S.-A."/>
            <person name="McCullagh B."/>
            <person name="Robben J."/>
            <person name="Grymonprez B."/>
            <person name="Zimmermann W."/>
            <person name="Ramsperger U."/>
            <person name="Wedler H."/>
            <person name="Balke K."/>
            <person name="Wedler E."/>
            <person name="Peters S."/>
            <person name="van Staveren M."/>
            <person name="Dirkse W."/>
            <person name="Mooijman P."/>
            <person name="Klein Lankhorst R."/>
            <person name="Weitzenegger T."/>
            <person name="Bothe G."/>
            <person name="Rose M."/>
            <person name="Hauf J."/>
            <person name="Berneiser S."/>
            <person name="Hempel S."/>
            <person name="Feldpausch M."/>
            <person name="Lamberth S."/>
            <person name="Villarroel R."/>
            <person name="Gielen J."/>
            <person name="Ardiles W."/>
            <person name="Bents O."/>
            <person name="Lemcke K."/>
            <person name="Kolesov G."/>
            <person name="Mayer K.F.X."/>
            <person name="Rudd S."/>
            <person name="Schoof H."/>
            <person name="Schueller C."/>
            <person name="Zaccaria P."/>
            <person name="Mewes H.-W."/>
            <person name="Bevan M."/>
            <person name="Fransz P.F."/>
        </authorList>
    </citation>
    <scope>NUCLEOTIDE SEQUENCE [LARGE SCALE GENOMIC DNA]</scope>
    <source>
        <strain>cv. Columbia</strain>
    </source>
</reference>
<reference key="3">
    <citation type="journal article" date="2017" name="Plant J.">
        <title>Araport11: a complete reannotation of the Arabidopsis thaliana reference genome.</title>
        <authorList>
            <person name="Cheng C.Y."/>
            <person name="Krishnakumar V."/>
            <person name="Chan A.P."/>
            <person name="Thibaud-Nissen F."/>
            <person name="Schobel S."/>
            <person name="Town C.D."/>
        </authorList>
    </citation>
    <scope>GENOME REANNOTATION</scope>
    <source>
        <strain>cv. Columbia</strain>
    </source>
</reference>
<reference key="4">
    <citation type="journal article" date="2005" name="Plant Cell">
        <title>Comprehensive interaction map of the Arabidopsis MADS Box transcription factors.</title>
        <authorList>
            <person name="de Folter S."/>
            <person name="Immink R.G.H."/>
            <person name="Kieffer M."/>
            <person name="Parenicova L."/>
            <person name="Henz S.R."/>
            <person name="Weigel D."/>
            <person name="Busscher M."/>
            <person name="Kooiker M."/>
            <person name="Colombo L."/>
            <person name="Kater M.M."/>
            <person name="Davies B."/>
            <person name="Angenent G.C."/>
        </authorList>
    </citation>
    <scope>INTERACTION WITH AGL62</scope>
</reference>
<sequence length="320" mass="36730">MKKVKLSLIANERSRKTSFMKRKNGIFKKLHELSTLCGVQACALIYSPFIPVPESWPSREGAKKVASKFLEMPRTARTRKMMDQETHLMERITKAKEQLKNLAAENRELQVRRFMFDCVEGKMSQYRYDAKDLQDLLSCMNLYLDQLNGRIESIKENGESLLSSVSPFPTRIGVDEIGDESFSDSPIHSTTRVVDTPNATNPHVLAGDMTPFLDADANANMNQVQYQAPNNLFNQIQREFYNINLNLNLNLNSNQYLNQQQSFMNPMVEQHMNHVGGRESIPFVDRNYYNYNQLPAVDLASTSYMPSTTDVYDPYINNNL</sequence>
<evidence type="ECO:0000255" key="1"/>
<evidence type="ECO:0000255" key="2">
    <source>
        <dbReference type="PROSITE-ProRule" id="PRU00251"/>
    </source>
</evidence>
<evidence type="ECO:0000269" key="3">
    <source>
    </source>
</evidence>
<evidence type="ECO:0000305" key="4"/>
<feature type="chain" id="PRO_0000363653" description="Agamous-like MADS-box protein AGL90">
    <location>
        <begin position="1"/>
        <end position="320"/>
    </location>
</feature>
<feature type="domain" description="MADS-box" evidence="2">
    <location>
        <begin position="1"/>
        <end position="59"/>
    </location>
</feature>
<feature type="coiled-coil region" evidence="1">
    <location>
        <begin position="80"/>
        <end position="115"/>
    </location>
</feature>
<feature type="sequence conflict" description="In Ref. 1; AAN52813." evidence="4" ref="1">
    <original>L</original>
    <variation>H</variation>
    <location>
        <position position="294"/>
    </location>
</feature>
<proteinExistence type="evidence at protein level"/>
<keyword id="KW-0175">Coiled coil</keyword>
<keyword id="KW-0238">DNA-binding</keyword>
<keyword id="KW-0539">Nucleus</keyword>
<keyword id="KW-1185">Reference proteome</keyword>
<keyword id="KW-0804">Transcription</keyword>
<keyword id="KW-0805">Transcription regulation</keyword>
<protein>
    <recommendedName>
        <fullName>Agamous-like MADS-box protein AGL90</fullName>
    </recommendedName>
</protein>
<dbReference type="EMBL" id="AY141249">
    <property type="protein sequence ID" value="AAN52813.1"/>
    <property type="molecule type" value="mRNA"/>
</dbReference>
<dbReference type="EMBL" id="AC007627">
    <property type="status" value="NOT_ANNOTATED_CDS"/>
    <property type="molecule type" value="Genomic_DNA"/>
</dbReference>
<dbReference type="EMBL" id="CP002688">
    <property type="protein sequence ID" value="AED93751.1"/>
    <property type="molecule type" value="Genomic_DNA"/>
</dbReference>
<dbReference type="RefSeq" id="NP_198148.2">
    <property type="nucleotide sequence ID" value="NM_122679.2"/>
</dbReference>
<dbReference type="SMR" id="Q7XJK5"/>
<dbReference type="BioGRID" id="18139">
    <property type="interactions" value="7"/>
</dbReference>
<dbReference type="FunCoup" id="Q7XJK5">
    <property type="interactions" value="21"/>
</dbReference>
<dbReference type="IntAct" id="Q7XJK5">
    <property type="interactions" value="11"/>
</dbReference>
<dbReference type="STRING" id="3702.Q7XJK5"/>
<dbReference type="PaxDb" id="3702-AT5G27960.1"/>
<dbReference type="ProteomicsDB" id="244675"/>
<dbReference type="EnsemblPlants" id="AT5G27960.1">
    <property type="protein sequence ID" value="AT5G27960.1"/>
    <property type="gene ID" value="AT5G27960"/>
</dbReference>
<dbReference type="GeneID" id="832865"/>
<dbReference type="Gramene" id="AT5G27960.1">
    <property type="protein sequence ID" value="AT5G27960.1"/>
    <property type="gene ID" value="AT5G27960"/>
</dbReference>
<dbReference type="KEGG" id="ath:AT5G27960"/>
<dbReference type="Araport" id="AT5G27960"/>
<dbReference type="TAIR" id="AT5G27960">
    <property type="gene designation" value="AGL90"/>
</dbReference>
<dbReference type="eggNOG" id="KOG0014">
    <property type="taxonomic scope" value="Eukaryota"/>
</dbReference>
<dbReference type="HOGENOM" id="CLU_053053_7_1_1"/>
<dbReference type="InParanoid" id="Q7XJK5"/>
<dbReference type="OMA" id="QIQMQIP"/>
<dbReference type="PhylomeDB" id="Q7XJK5"/>
<dbReference type="PRO" id="PR:Q7XJK5"/>
<dbReference type="Proteomes" id="UP000006548">
    <property type="component" value="Chromosome 5"/>
</dbReference>
<dbReference type="ExpressionAtlas" id="Q7XJK5">
    <property type="expression patterns" value="baseline"/>
</dbReference>
<dbReference type="GO" id="GO:0005634">
    <property type="term" value="C:nucleus"/>
    <property type="evidence" value="ECO:0007669"/>
    <property type="project" value="UniProtKB-SubCell"/>
</dbReference>
<dbReference type="GO" id="GO:0000987">
    <property type="term" value="F:cis-regulatory region sequence-specific DNA binding"/>
    <property type="evidence" value="ECO:0007669"/>
    <property type="project" value="InterPro"/>
</dbReference>
<dbReference type="GO" id="GO:0003700">
    <property type="term" value="F:DNA-binding transcription factor activity"/>
    <property type="evidence" value="ECO:0000250"/>
    <property type="project" value="TAIR"/>
</dbReference>
<dbReference type="GO" id="GO:0000981">
    <property type="term" value="F:DNA-binding transcription factor activity, RNA polymerase II-specific"/>
    <property type="evidence" value="ECO:0007669"/>
    <property type="project" value="InterPro"/>
</dbReference>
<dbReference type="GO" id="GO:0046983">
    <property type="term" value="F:protein dimerization activity"/>
    <property type="evidence" value="ECO:0007669"/>
    <property type="project" value="InterPro"/>
</dbReference>
<dbReference type="GO" id="GO:0045944">
    <property type="term" value="P:positive regulation of transcription by RNA polymerase II"/>
    <property type="evidence" value="ECO:0007669"/>
    <property type="project" value="InterPro"/>
</dbReference>
<dbReference type="CDD" id="cd00266">
    <property type="entry name" value="MADS_SRF_like"/>
    <property type="match status" value="1"/>
</dbReference>
<dbReference type="FunFam" id="3.40.1810.10:FF:000024">
    <property type="entry name" value="Agamous-like MADS-box protein AGL80"/>
    <property type="match status" value="1"/>
</dbReference>
<dbReference type="Gene3D" id="3.40.1810.10">
    <property type="entry name" value="Transcription factor, MADS-box"/>
    <property type="match status" value="1"/>
</dbReference>
<dbReference type="InterPro" id="IPR033897">
    <property type="entry name" value="SRF-like_MADS-box"/>
</dbReference>
<dbReference type="InterPro" id="IPR002100">
    <property type="entry name" value="TF_MADSbox"/>
</dbReference>
<dbReference type="InterPro" id="IPR036879">
    <property type="entry name" value="TF_MADSbox_sf"/>
</dbReference>
<dbReference type="PANTHER" id="PTHR11945:SF788">
    <property type="entry name" value="AGAMOUS-LIKE-34-RELATED"/>
    <property type="match status" value="1"/>
</dbReference>
<dbReference type="PANTHER" id="PTHR11945">
    <property type="entry name" value="MADS BOX PROTEIN"/>
    <property type="match status" value="1"/>
</dbReference>
<dbReference type="Pfam" id="PF00319">
    <property type="entry name" value="SRF-TF"/>
    <property type="match status" value="1"/>
</dbReference>
<dbReference type="PRINTS" id="PR00404">
    <property type="entry name" value="MADSDOMAIN"/>
</dbReference>
<dbReference type="SMART" id="SM00432">
    <property type="entry name" value="MADS"/>
    <property type="match status" value="1"/>
</dbReference>
<dbReference type="SUPFAM" id="SSF55455">
    <property type="entry name" value="SRF-like"/>
    <property type="match status" value="1"/>
</dbReference>
<dbReference type="PROSITE" id="PS50066">
    <property type="entry name" value="MADS_BOX_2"/>
    <property type="match status" value="1"/>
</dbReference>